<name>DADH_EGGLN</name>
<dbReference type="EC" id="1.1.-.-" evidence="4"/>
<dbReference type="EMBL" id="PPUK01000004">
    <property type="protein sequence ID" value="RDC20416.1"/>
    <property type="molecule type" value="Genomic_DNA"/>
</dbReference>
<dbReference type="SMR" id="A0A369NIV7"/>
<dbReference type="BioCyc" id="MetaCyc:MONOMER-21043"/>
<dbReference type="GO" id="GO:0051539">
    <property type="term" value="F:4 iron, 4 sulfur cluster binding"/>
    <property type="evidence" value="ECO:0007669"/>
    <property type="project" value="UniProtKB-KW"/>
</dbReference>
<dbReference type="GO" id="GO:0018818">
    <property type="term" value="F:acetylene hydratase activity"/>
    <property type="evidence" value="ECO:0007669"/>
    <property type="project" value="InterPro"/>
</dbReference>
<dbReference type="GO" id="GO:0046872">
    <property type="term" value="F:metal ion binding"/>
    <property type="evidence" value="ECO:0007669"/>
    <property type="project" value="UniProtKB-KW"/>
</dbReference>
<dbReference type="GO" id="GO:0043546">
    <property type="term" value="F:molybdopterin cofactor binding"/>
    <property type="evidence" value="ECO:0007669"/>
    <property type="project" value="InterPro"/>
</dbReference>
<dbReference type="GO" id="GO:0016491">
    <property type="term" value="F:oxidoreductase activity"/>
    <property type="evidence" value="ECO:0007669"/>
    <property type="project" value="UniProtKB-KW"/>
</dbReference>
<dbReference type="GO" id="GO:1903184">
    <property type="term" value="P:L-dopa metabolic process"/>
    <property type="evidence" value="ECO:0000314"/>
    <property type="project" value="UniProtKB"/>
</dbReference>
<dbReference type="CDD" id="cd02781">
    <property type="entry name" value="MopB_CT_Acetylene-hydratase"/>
    <property type="match status" value="1"/>
</dbReference>
<dbReference type="Gene3D" id="2.40.40.20">
    <property type="match status" value="1"/>
</dbReference>
<dbReference type="Gene3D" id="3.40.50.740">
    <property type="match status" value="2"/>
</dbReference>
<dbReference type="Gene3D" id="2.20.25.90">
    <property type="entry name" value="ADC-like domains"/>
    <property type="match status" value="1"/>
</dbReference>
<dbReference type="Gene3D" id="3.40.228.10">
    <property type="entry name" value="Dimethylsulfoxide Reductase, domain 2"/>
    <property type="match status" value="2"/>
</dbReference>
<dbReference type="InterPro" id="IPR009010">
    <property type="entry name" value="Asp_de-COase-like_dom_sf"/>
</dbReference>
<dbReference type="InterPro" id="IPR037949">
    <property type="entry name" value="MopB_CT_Acetylene-hydratase"/>
</dbReference>
<dbReference type="InterPro" id="IPR006657">
    <property type="entry name" value="MoPterin_dinucl-bd_dom"/>
</dbReference>
<dbReference type="InterPro" id="IPR006656">
    <property type="entry name" value="Mopterin_OxRdtase"/>
</dbReference>
<dbReference type="InterPro" id="IPR006963">
    <property type="entry name" value="Mopterin_OxRdtase_4Fe-4S_dom"/>
</dbReference>
<dbReference type="InterPro" id="IPR050612">
    <property type="entry name" value="Prok_Mopterin_Oxidored"/>
</dbReference>
<dbReference type="InterPro" id="IPR006311">
    <property type="entry name" value="TAT_signal"/>
</dbReference>
<dbReference type="PANTHER" id="PTHR43742">
    <property type="entry name" value="TRIMETHYLAMINE-N-OXIDE REDUCTASE"/>
    <property type="match status" value="1"/>
</dbReference>
<dbReference type="Pfam" id="PF04879">
    <property type="entry name" value="Molybdop_Fe4S4"/>
    <property type="match status" value="1"/>
</dbReference>
<dbReference type="Pfam" id="PF00384">
    <property type="entry name" value="Molybdopterin"/>
    <property type="match status" value="1"/>
</dbReference>
<dbReference type="Pfam" id="PF01568">
    <property type="entry name" value="Molydop_binding"/>
    <property type="match status" value="1"/>
</dbReference>
<dbReference type="SMART" id="SM00926">
    <property type="entry name" value="Molybdop_Fe4S4"/>
    <property type="match status" value="1"/>
</dbReference>
<dbReference type="SUPFAM" id="SSF50692">
    <property type="entry name" value="ADC-like"/>
    <property type="match status" value="1"/>
</dbReference>
<dbReference type="SUPFAM" id="SSF53706">
    <property type="entry name" value="Formate dehydrogenase/DMSO reductase, domains 1-3"/>
    <property type="match status" value="1"/>
</dbReference>
<dbReference type="PROSITE" id="PS51669">
    <property type="entry name" value="4FE4S_MOW_BIS_MGD"/>
    <property type="match status" value="1"/>
</dbReference>
<dbReference type="PROSITE" id="PS51318">
    <property type="entry name" value="TAT"/>
    <property type="match status" value="1"/>
</dbReference>
<keyword id="KW-0004">4Fe-4S</keyword>
<keyword id="KW-0408">Iron</keyword>
<keyword id="KW-0411">Iron-sulfur</keyword>
<keyword id="KW-0479">Metal-binding</keyword>
<keyword id="KW-0500">Molybdenum</keyword>
<keyword id="KW-0560">Oxidoreductase</keyword>
<keyword id="KW-0732">Signal</keyword>
<comment type="function">
    <text evidence="4">Involved in drug metabolism, as part of an interspecies gut bacterial pathway for Levodopa (L-dopa) metabolism, acting on dopamine produced by Enterecoccus L-dopa decarboxylase. Removes the para hydroxyl group of dopamine to produce m-tyramine (3-tyramine). It is possible that dopamine dehydroxylation influences the multiple side effects of L-dopa administration linked to dopamine production in the treatment of Parkinson's disease.</text>
</comment>
<comment type="catalytic activity">
    <reaction evidence="4">
        <text>dopamine + AH2 = 3-tyramine + A + H2O</text>
        <dbReference type="Rhea" id="RHEA:61520"/>
        <dbReference type="ChEBI" id="CHEBI:13193"/>
        <dbReference type="ChEBI" id="CHEBI:15377"/>
        <dbReference type="ChEBI" id="CHEBI:17499"/>
        <dbReference type="ChEBI" id="CHEBI:59905"/>
        <dbReference type="ChEBI" id="CHEBI:144800"/>
    </reaction>
</comment>
<comment type="cofactor">
    <cofactor evidence="1">
        <name>[4Fe-4S] cluster</name>
        <dbReference type="ChEBI" id="CHEBI:49883"/>
    </cofactor>
    <text evidence="1">Binds 1 [4Fe-4S] cluster.</text>
</comment>
<comment type="cofactor">
    <cofactor evidence="4">
        <name>Mo-bis(molybdopterin guanine dinucleotide)</name>
        <dbReference type="ChEBI" id="CHEBI:60539"/>
    </cofactor>
    <text evidence="1">Binds 1 molybdenum-bis(molybdopterin guanine dinucleotide) (Mo-bis-MGD) cofactor per subunit.</text>
</comment>
<comment type="induction">
    <text evidence="4">Up-regulated in response to dopamine.</text>
</comment>
<comment type="PTM">
    <text evidence="2">Predicted to be exported by the Tat system. The position of the signal peptide cleavage has not been experimentally proven.</text>
</comment>
<comment type="miscellaneous">
    <text evidence="4">Although all E.lenta strains examined are dopamine-inducible, less than 50% dehydroxylate dopamine. Intriguingly, this is due to the presence of a single-nucleotide polymorphism (SNP) that results in an Arg-506 to Ser substitution that inactivates the enzyme.</text>
</comment>
<comment type="similarity">
    <text evidence="6">Belongs to the prokaryotic molybdopterin-containing oxidoreductase family.</text>
</comment>
<gene>
    <name evidence="5" type="primary">dadH</name>
    <name evidence="7" type="ORF">C1859_04790</name>
</gene>
<evidence type="ECO:0000250" key="1">
    <source>
        <dbReference type="UniProtKB" id="P07658"/>
    </source>
</evidence>
<evidence type="ECO:0000255" key="2">
    <source>
        <dbReference type="PROSITE-ProRule" id="PRU00648"/>
    </source>
</evidence>
<evidence type="ECO:0000255" key="3">
    <source>
        <dbReference type="PROSITE-ProRule" id="PRU01004"/>
    </source>
</evidence>
<evidence type="ECO:0000269" key="4">
    <source>
    </source>
</evidence>
<evidence type="ECO:0000303" key="5">
    <source>
    </source>
</evidence>
<evidence type="ECO:0000305" key="6"/>
<evidence type="ECO:0000312" key="7">
    <source>
        <dbReference type="EMBL" id="RDC20416.1"/>
    </source>
</evidence>
<protein>
    <recommendedName>
        <fullName evidence="5">Dopamine dehydroxylase</fullName>
        <ecNumber evidence="4">1.1.-.-</ecNumber>
    </recommendedName>
</protein>
<feature type="signal peptide" description="Tat-type signal" evidence="2">
    <location>
        <begin position="1"/>
        <end position="34"/>
    </location>
</feature>
<feature type="chain" id="PRO_5016629686" description="Dopamine dehydroxylase">
    <location>
        <begin position="35"/>
        <end position="1017"/>
    </location>
</feature>
<feature type="domain" description="4Fe-4S Mo/W bis-MGD-type" evidence="3">
    <location>
        <begin position="45"/>
        <end position="103"/>
    </location>
</feature>
<feature type="active site" description="Electron donor/acceptor" evidence="1">
    <location>
        <position position="91"/>
    </location>
</feature>
<feature type="binding site" evidence="1">
    <location>
        <position position="53"/>
    </location>
    <ligand>
        <name>[4Fe-4S] cluster</name>
        <dbReference type="ChEBI" id="CHEBI:49883"/>
    </ligand>
</feature>
<feature type="binding site" evidence="1">
    <location>
        <position position="56"/>
    </location>
    <ligand>
        <name>[4Fe-4S] cluster</name>
        <dbReference type="ChEBI" id="CHEBI:49883"/>
    </ligand>
</feature>
<feature type="binding site" evidence="1">
    <location>
        <position position="61"/>
    </location>
    <ligand>
        <name>[4Fe-4S] cluster</name>
        <dbReference type="ChEBI" id="CHEBI:49883"/>
    </ligand>
</feature>
<feature type="binding site" evidence="1">
    <location>
        <position position="89"/>
    </location>
    <ligand>
        <name>[4Fe-4S] cluster</name>
        <dbReference type="ChEBI" id="CHEBI:49883"/>
    </ligand>
</feature>
<feature type="site" description="Crucial for dopamine dehydroxylation activity" evidence="4">
    <location>
        <position position="506"/>
    </location>
</feature>
<sequence>MGNLTMSRRTFVKTAAITGAAAAAFGASTHTALAEETYSSVSGNDTVAVKTCCRGCGKMECGVKVIVQNGRAIRVEGDEGAFQSMGNCCTKSQSSIQAAYHPDRLHYPMKRTNPKGEEPGWQRISWDEAMQSIVDNFMDIKAKHGGEAIACQVGTSRIWCMHSESILKNMLETPNNVEAWQICKGPRHFATTMVSQFAMSWMETITRPKVYVQWGGASELSNYDDSCRTTVDVASRADVHISVDPRMANMGKEADYWQHLRPGTDGALALAWTNVIIEKKLYDELYVKKWTNAPFLVCEDMEPSGFPTVRTDGSYWDVKTALLKESDIKEGGSPYKFLVYDNNWEKLKAEGVEHEYGAFTWFNADQEGVIDETGGFWEGENYDSEKARQGREAAQDNLLPGQTQGWLPDPMPFDPAIDPALEGEFEITLKDGKTVKVKPVWEHYKARAAEYKPEVAAEITGIPASEIEAAATAYGTRIDPSTGYGNGGIQYMLAVEHFCSAIQNCRAFDNLVGITGNMDTPGGNRGPTIVPIDGDLQGFSAWAPGATTPPEEVNRKQIGIDKFPLLGWWQYWCDSHSLWDAVITGDPYPVRALWNESGNFMSQTNTTRAWEALCSLDFYVDLNLWHTPQNDTADIILPVAHWIELNSPRASQGSAGAMGATVKCVQPPAEAKYDPEIVMDLARRMNWKWTDEPGNEWPDINWQLDDSIKLLTDDELTYTTWHVENGKPTFERHGVPMAEVTPKYKTWDEYVKAFQEHGWWQAKDIEPRNWGTYRRYQTGAMRARDRVWGRLDYTAGKGIGDWKPGWFTPTMKQEIWSTVMESHHPDHPEWRLPTYTEPPHGPKDGDRIKEYPLTATTGRRIPVYFHSEHRQLPWCRELWPVPRVEINPKTAAEYGIEQGDWVWIETEWGKIREVADLYYGVKEDVINLEHTWWYPEVKDAGHGWQFSQVNQLIDHYAQDPHSGTSNLRAYQVKIYKATPENSPFNNPVPCDSTGTPIIHTSDDPRLKEWLPTYEGRE</sequence>
<proteinExistence type="evidence at protein level"/>
<accession>A0A369NIV7</accession>
<reference key="1">
    <citation type="journal article" date="2018" name="Elife">
        <title>Discovery and characterization of a prevalent human gut bacterial enzyme sufficient for the inactivation of a family of plant toxins.</title>
        <authorList>
            <person name="Koppel N."/>
            <person name="Bisanz J.E."/>
            <person name="Pandelia M.E."/>
            <person name="Turnbaugh P.J."/>
            <person name="Balskus E.P."/>
        </authorList>
    </citation>
    <scope>NUCLEOTIDE SEQUENCE [LARGE SCALE GENOMIC DNA]</scope>
    <source>
        <strain>AB12 #2</strain>
    </source>
</reference>
<reference key="2">
    <citation type="journal article" date="2019" name="Science">
        <title>Discovery and inhibition of an interspecies gut bacterial pathway for Levodopa metabolism.</title>
        <authorList>
            <person name="Maini Rekdal V."/>
            <person name="Bess E.N."/>
            <person name="Bisanz J.E."/>
            <person name="Turnbaugh P.J."/>
            <person name="Balskus E.P."/>
        </authorList>
    </citation>
    <scope>FUNCTION</scope>
    <scope>CATALYTIC ACTIVITY</scope>
    <scope>INDUCTION</scope>
    <scope>COFACTOR</scope>
    <source>
        <strain>A2</strain>
    </source>
</reference>
<organism>
    <name type="scientific">Eggerthella lenta</name>
    <name type="common">Eubacterium lentum</name>
    <dbReference type="NCBI Taxonomy" id="84112"/>
    <lineage>
        <taxon>Bacteria</taxon>
        <taxon>Bacillati</taxon>
        <taxon>Actinomycetota</taxon>
        <taxon>Coriobacteriia</taxon>
        <taxon>Eggerthellales</taxon>
        <taxon>Eggerthellaceae</taxon>
        <taxon>Eggerthella</taxon>
    </lineage>
</organism>